<reference key="1">
    <citation type="journal article" date="2005" name="Arch. Microbiol.">
        <title>The genome sequence of an anaerobic aromatic-degrading denitrifying bacterium, strain EbN1.</title>
        <authorList>
            <person name="Rabus R."/>
            <person name="Kube M."/>
            <person name="Heider J."/>
            <person name="Beck A."/>
            <person name="Heitmann K."/>
            <person name="Widdel F."/>
            <person name="Reinhardt R."/>
        </authorList>
    </citation>
    <scope>NUCLEOTIDE SEQUENCE [LARGE SCALE GENOMIC DNA]</scope>
    <source>
        <strain>DSM 19018 / LMG 30748 / EbN1</strain>
    </source>
</reference>
<accession>Q5P2E3</accession>
<dbReference type="EC" id="2.5.1.141" evidence="1"/>
<dbReference type="EMBL" id="CR555306">
    <property type="protein sequence ID" value="CAI08521.1"/>
    <property type="molecule type" value="Genomic_DNA"/>
</dbReference>
<dbReference type="RefSeq" id="WP_011238208.1">
    <property type="nucleotide sequence ID" value="NC_006513.1"/>
</dbReference>
<dbReference type="SMR" id="Q5P2E3"/>
<dbReference type="STRING" id="76114.ebA4237"/>
<dbReference type="KEGG" id="eba:ebA4237"/>
<dbReference type="eggNOG" id="COG0109">
    <property type="taxonomic scope" value="Bacteria"/>
</dbReference>
<dbReference type="HOGENOM" id="CLU_029631_0_2_4"/>
<dbReference type="OrthoDB" id="9814417at2"/>
<dbReference type="UniPathway" id="UPA00834">
    <property type="reaction ID" value="UER00712"/>
</dbReference>
<dbReference type="Proteomes" id="UP000006552">
    <property type="component" value="Chromosome"/>
</dbReference>
<dbReference type="GO" id="GO:0005886">
    <property type="term" value="C:plasma membrane"/>
    <property type="evidence" value="ECO:0007669"/>
    <property type="project" value="UniProtKB-SubCell"/>
</dbReference>
<dbReference type="GO" id="GO:0008495">
    <property type="term" value="F:protoheme IX farnesyltransferase activity"/>
    <property type="evidence" value="ECO:0007669"/>
    <property type="project" value="UniProtKB-UniRule"/>
</dbReference>
<dbReference type="GO" id="GO:0048034">
    <property type="term" value="P:heme O biosynthetic process"/>
    <property type="evidence" value="ECO:0007669"/>
    <property type="project" value="UniProtKB-UniRule"/>
</dbReference>
<dbReference type="CDD" id="cd13957">
    <property type="entry name" value="PT_UbiA_Cox10"/>
    <property type="match status" value="1"/>
</dbReference>
<dbReference type="Gene3D" id="1.10.357.140">
    <property type="entry name" value="UbiA prenyltransferase"/>
    <property type="match status" value="1"/>
</dbReference>
<dbReference type="HAMAP" id="MF_00154">
    <property type="entry name" value="CyoE_CtaB"/>
    <property type="match status" value="1"/>
</dbReference>
<dbReference type="InterPro" id="IPR006369">
    <property type="entry name" value="Protohaem_IX_farnesylTrfase"/>
</dbReference>
<dbReference type="InterPro" id="IPR000537">
    <property type="entry name" value="UbiA_prenyltransferase"/>
</dbReference>
<dbReference type="InterPro" id="IPR030470">
    <property type="entry name" value="UbiA_prenylTrfase_CS"/>
</dbReference>
<dbReference type="InterPro" id="IPR044878">
    <property type="entry name" value="UbiA_sf"/>
</dbReference>
<dbReference type="NCBIfam" id="TIGR01473">
    <property type="entry name" value="cyoE_ctaB"/>
    <property type="match status" value="1"/>
</dbReference>
<dbReference type="NCBIfam" id="NF003349">
    <property type="entry name" value="PRK04375.1-2"/>
    <property type="match status" value="1"/>
</dbReference>
<dbReference type="PANTHER" id="PTHR43448:SF7">
    <property type="entry name" value="4-HYDROXYBENZOATE SOLANESYLTRANSFERASE"/>
    <property type="match status" value="1"/>
</dbReference>
<dbReference type="PANTHER" id="PTHR43448">
    <property type="entry name" value="PROTOHEME IX FARNESYLTRANSFERASE, MITOCHONDRIAL"/>
    <property type="match status" value="1"/>
</dbReference>
<dbReference type="Pfam" id="PF01040">
    <property type="entry name" value="UbiA"/>
    <property type="match status" value="1"/>
</dbReference>
<dbReference type="PROSITE" id="PS00943">
    <property type="entry name" value="UBIA"/>
    <property type="match status" value="1"/>
</dbReference>
<name>COXX_AROAE</name>
<evidence type="ECO:0000255" key="1">
    <source>
        <dbReference type="HAMAP-Rule" id="MF_00154"/>
    </source>
</evidence>
<comment type="function">
    <text evidence="1">Converts heme B (protoheme IX) to heme O by substitution of the vinyl group on carbon 2 of heme B porphyrin ring with a hydroxyethyl farnesyl side group.</text>
</comment>
<comment type="catalytic activity">
    <reaction evidence="1">
        <text>heme b + (2E,6E)-farnesyl diphosphate + H2O = Fe(II)-heme o + diphosphate</text>
        <dbReference type="Rhea" id="RHEA:28070"/>
        <dbReference type="ChEBI" id="CHEBI:15377"/>
        <dbReference type="ChEBI" id="CHEBI:33019"/>
        <dbReference type="ChEBI" id="CHEBI:60344"/>
        <dbReference type="ChEBI" id="CHEBI:60530"/>
        <dbReference type="ChEBI" id="CHEBI:175763"/>
        <dbReference type="EC" id="2.5.1.141"/>
    </reaction>
</comment>
<comment type="pathway">
    <text evidence="1">Porphyrin-containing compound metabolism; heme O biosynthesis; heme O from protoheme: step 1/1.</text>
</comment>
<comment type="subcellular location">
    <subcellularLocation>
        <location evidence="1">Cell inner membrane</location>
        <topology evidence="1">Multi-pass membrane protein</topology>
    </subcellularLocation>
</comment>
<comment type="miscellaneous">
    <text evidence="1">Carbon 2 of the heme B porphyrin ring is defined according to the Fischer nomenclature.</text>
</comment>
<comment type="similarity">
    <text evidence="1">Belongs to the UbiA prenyltransferase family. Protoheme IX farnesyltransferase subfamily.</text>
</comment>
<sequence>MSVLNTRTLTLDRHAAARRLHAFYVLTKPRVNTLIVFCAVIGMFLAVPDGLPDPKSVVAATLGIAFVAGAAAAMNCLIEAHIDARMARTRHRPLPRGELAPAETLLFAGVLGGTGLTVLYHWVNPLTMWLTLATFVGYAVVYTVLLKPRTPQNIVIGGASGAMPPVLGWAAVTGEVSADALLLFLIIFAWTPPHFWALALYRSADYARAGLPMLPVTHGPEFTRLSVLLYTCILFGVTLLPFATRMSGPLYLVCAVALGIGFLRHAWRLYADYSDAFARRTFRFSILYLFLLFAALLMDHYLPL</sequence>
<protein>
    <recommendedName>
        <fullName evidence="1">Protoheme IX farnesyltransferase</fullName>
        <ecNumber evidence="1">2.5.1.141</ecNumber>
    </recommendedName>
    <alternativeName>
        <fullName evidence="1">Heme B farnesyltransferase</fullName>
    </alternativeName>
    <alternativeName>
        <fullName evidence="1">Heme O synthase</fullName>
    </alternativeName>
</protein>
<organism>
    <name type="scientific">Aromatoleum aromaticum (strain DSM 19018 / LMG 30748 / EbN1)</name>
    <name type="common">Azoarcus sp. (strain EbN1)</name>
    <dbReference type="NCBI Taxonomy" id="76114"/>
    <lineage>
        <taxon>Bacteria</taxon>
        <taxon>Pseudomonadati</taxon>
        <taxon>Pseudomonadota</taxon>
        <taxon>Betaproteobacteria</taxon>
        <taxon>Rhodocyclales</taxon>
        <taxon>Rhodocyclaceae</taxon>
        <taxon>Aromatoleum</taxon>
    </lineage>
</organism>
<keyword id="KW-0997">Cell inner membrane</keyword>
<keyword id="KW-1003">Cell membrane</keyword>
<keyword id="KW-0350">Heme biosynthesis</keyword>
<keyword id="KW-0472">Membrane</keyword>
<keyword id="KW-1185">Reference proteome</keyword>
<keyword id="KW-0808">Transferase</keyword>
<keyword id="KW-0812">Transmembrane</keyword>
<keyword id="KW-1133">Transmembrane helix</keyword>
<feature type="chain" id="PRO_0000326998" description="Protoheme IX farnesyltransferase">
    <location>
        <begin position="1"/>
        <end position="304"/>
    </location>
</feature>
<feature type="transmembrane region" description="Helical" evidence="1">
    <location>
        <begin position="31"/>
        <end position="51"/>
    </location>
</feature>
<feature type="transmembrane region" description="Helical" evidence="1">
    <location>
        <begin position="58"/>
        <end position="78"/>
    </location>
</feature>
<feature type="transmembrane region" description="Helical" evidence="1">
    <location>
        <begin position="99"/>
        <end position="119"/>
    </location>
</feature>
<feature type="transmembrane region" description="Helical" evidence="1">
    <location>
        <begin position="126"/>
        <end position="146"/>
    </location>
</feature>
<feature type="transmembrane region" description="Helical" evidence="1">
    <location>
        <begin position="154"/>
        <end position="174"/>
    </location>
</feature>
<feature type="transmembrane region" description="Helical" evidence="1">
    <location>
        <begin position="180"/>
        <end position="200"/>
    </location>
</feature>
<feature type="transmembrane region" description="Helical" evidence="1">
    <location>
        <begin position="222"/>
        <end position="242"/>
    </location>
</feature>
<feature type="transmembrane region" description="Helical" evidence="1">
    <location>
        <begin position="243"/>
        <end position="263"/>
    </location>
</feature>
<feature type="transmembrane region" description="Helical" evidence="1">
    <location>
        <begin position="284"/>
        <end position="304"/>
    </location>
</feature>
<proteinExistence type="inferred from homology"/>
<gene>
    <name evidence="1" type="primary">ctaB</name>
    <name type="ordered locus">AZOSEA23960</name>
    <name type="ORF">ebA4237</name>
</gene>